<comment type="function">
    <text evidence="1">Excitatory insect beta-toxins induce a spastic paralysis. They bind voltage-independently at site-4 of sodium channels (Nav) and shift the voltage of activation toward more negative potentials thereby affecting sodium channel activation and promoting spontaneous and repetitive firing (By similarity).</text>
</comment>
<comment type="subcellular location">
    <subcellularLocation>
        <location evidence="1">Secreted</location>
    </subcellularLocation>
</comment>
<comment type="tissue specificity">
    <text>Expressed by the venom gland.</text>
</comment>
<comment type="domain">
    <text evidence="4">Has the structural arrangement of an alpha-helix connected to antiparallel beta-sheets by disulfide bonds (CS-alpha/beta).</text>
</comment>
<comment type="similarity">
    <text evidence="4">Belongs to the long (4 C-C) scorpion toxin superfamily. Sodium channel inhibitor family. Beta subfamily.</text>
</comment>
<organism>
    <name type="scientific">Tityus pachyurus</name>
    <name type="common">Colombian scorpion</name>
    <dbReference type="NCBI Taxonomy" id="288781"/>
    <lineage>
        <taxon>Eukaryota</taxon>
        <taxon>Metazoa</taxon>
        <taxon>Ecdysozoa</taxon>
        <taxon>Arthropoda</taxon>
        <taxon>Chelicerata</taxon>
        <taxon>Arachnida</taxon>
        <taxon>Scorpiones</taxon>
        <taxon>Buthida</taxon>
        <taxon>Buthoidea</taxon>
        <taxon>Buthidae</taxon>
        <taxon>Tityus</taxon>
    </lineage>
</organism>
<dbReference type="EMBL" id="HE585243">
    <property type="protein sequence ID" value="CCD31437.1"/>
    <property type="molecule type" value="mRNA"/>
</dbReference>
<dbReference type="SMR" id="H1ZZI9"/>
<dbReference type="GO" id="GO:0005576">
    <property type="term" value="C:extracellular region"/>
    <property type="evidence" value="ECO:0007669"/>
    <property type="project" value="UniProtKB-SubCell"/>
</dbReference>
<dbReference type="GO" id="GO:0019871">
    <property type="term" value="F:sodium channel inhibitor activity"/>
    <property type="evidence" value="ECO:0007669"/>
    <property type="project" value="InterPro"/>
</dbReference>
<dbReference type="GO" id="GO:0090729">
    <property type="term" value="F:toxin activity"/>
    <property type="evidence" value="ECO:0007669"/>
    <property type="project" value="UniProtKB-KW"/>
</dbReference>
<dbReference type="CDD" id="cd23106">
    <property type="entry name" value="neurotoxins_LC_scorpion"/>
    <property type="match status" value="1"/>
</dbReference>
<dbReference type="Gene3D" id="3.30.30.10">
    <property type="entry name" value="Knottin, scorpion toxin-like"/>
    <property type="match status" value="1"/>
</dbReference>
<dbReference type="InterPro" id="IPR044062">
    <property type="entry name" value="LCN-type_CS_alpha_beta_dom"/>
</dbReference>
<dbReference type="InterPro" id="IPR036574">
    <property type="entry name" value="Scorpion_toxin-like_sf"/>
</dbReference>
<dbReference type="InterPro" id="IPR002061">
    <property type="entry name" value="Scorpion_toxinL/defensin"/>
</dbReference>
<dbReference type="Pfam" id="PF00537">
    <property type="entry name" value="Toxin_3"/>
    <property type="match status" value="1"/>
</dbReference>
<dbReference type="SUPFAM" id="SSF57095">
    <property type="entry name" value="Scorpion toxin-like"/>
    <property type="match status" value="1"/>
</dbReference>
<dbReference type="PROSITE" id="PS51863">
    <property type="entry name" value="LCN_CSAB"/>
    <property type="match status" value="1"/>
</dbReference>
<accession>H1ZZI9</accession>
<name>SCX8_TITPA</name>
<keyword id="KW-1015">Disulfide bond</keyword>
<keyword id="KW-0872">Ion channel impairing toxin</keyword>
<keyword id="KW-0528">Neurotoxin</keyword>
<keyword id="KW-0964">Secreted</keyword>
<keyword id="KW-0732">Signal</keyword>
<keyword id="KW-0800">Toxin</keyword>
<keyword id="KW-0738">Voltage-gated sodium channel impairing toxin</keyword>
<feature type="signal peptide" evidence="2">
    <location>
        <begin position="1"/>
        <end position="20"/>
    </location>
</feature>
<feature type="chain" id="PRO_5000851452" description="Toxin Tpa8">
    <location>
        <begin position="21"/>
        <end position="101"/>
    </location>
</feature>
<feature type="domain" description="LCN-type CS-alpha/beta" evidence="3">
    <location>
        <begin position="24"/>
        <end position="98"/>
    </location>
</feature>
<feature type="disulfide bond" evidence="3">
    <location>
        <begin position="44"/>
        <end position="70"/>
    </location>
</feature>
<feature type="disulfide bond" evidence="3">
    <location>
        <begin position="56"/>
        <end position="75"/>
    </location>
</feature>
<feature type="disulfide bond" evidence="3">
    <location>
        <begin position="60"/>
        <end position="77"/>
    </location>
</feature>
<feature type="disulfide bond" evidence="3">
    <location>
        <begin position="71"/>
        <end position="97"/>
    </location>
</feature>
<protein>
    <recommendedName>
        <fullName>Toxin Tpa8</fullName>
    </recommendedName>
    <alternativeName>
        <fullName>T NaTx9.1</fullName>
    </alternativeName>
</protein>
<sequence length="101" mass="10960">MVKSEMKLVIFSLFLLLIGVESLKNGYPVIEGGGSPDYGESAECGSEDSNSADNFCNDICTNVGGKSGDCCLGSCFCFDLPDEQKTVEVMDRTKEYCEFVE</sequence>
<reference key="1">
    <citation type="journal article" date="2012" name="PLoS ONE">
        <title>Identification and phylogenetic analysis of Tityus pachyurus and Tityus obscurus novel putative Na+-channel scorpion toxins.</title>
        <authorList>
            <person name="Guerrero-Vargas J.A."/>
            <person name="Mourao C.B."/>
            <person name="Quintero-Hernandez V."/>
            <person name="Possani L.D."/>
            <person name="Schwartz E.F."/>
        </authorList>
    </citation>
    <scope>NUCLEOTIDE SEQUENCE [MRNA]</scope>
    <scope>NOMENCLATURE</scope>
    <source>
        <tissue>Venom gland</tissue>
    </source>
</reference>
<proteinExistence type="evidence at transcript level"/>
<evidence type="ECO:0000250" key="1"/>
<evidence type="ECO:0000255" key="2"/>
<evidence type="ECO:0000255" key="3">
    <source>
        <dbReference type="PROSITE-ProRule" id="PRU01210"/>
    </source>
</evidence>
<evidence type="ECO:0000305" key="4"/>